<accession>Q8G4T0</accession>
<evidence type="ECO:0000255" key="1">
    <source>
        <dbReference type="PROSITE-ProRule" id="PRU00520"/>
    </source>
</evidence>
<evidence type="ECO:0000305" key="2"/>
<name>ACYP_BIFLO</name>
<gene>
    <name type="primary">acyP</name>
    <name type="ordered locus">BL1294</name>
</gene>
<dbReference type="EC" id="3.6.1.7"/>
<dbReference type="EMBL" id="AE014295">
    <property type="protein sequence ID" value="AAN25095.1"/>
    <property type="molecule type" value="Genomic_DNA"/>
</dbReference>
<dbReference type="RefSeq" id="NP_696459.1">
    <property type="nucleotide sequence ID" value="NC_004307.2"/>
</dbReference>
<dbReference type="RefSeq" id="WP_007054380.1">
    <property type="nucleotide sequence ID" value="NC_004307.2"/>
</dbReference>
<dbReference type="SMR" id="Q8G4T0"/>
<dbReference type="STRING" id="206672.BL1294"/>
<dbReference type="EnsemblBacteria" id="AAN25095">
    <property type="protein sequence ID" value="AAN25095"/>
    <property type="gene ID" value="BL1294"/>
</dbReference>
<dbReference type="KEGG" id="blo:BL1294"/>
<dbReference type="PATRIC" id="fig|206672.9.peg.143"/>
<dbReference type="HOGENOM" id="CLU_141932_2_0_11"/>
<dbReference type="OrthoDB" id="3182027at2"/>
<dbReference type="PhylomeDB" id="Q8G4T0"/>
<dbReference type="Proteomes" id="UP000000439">
    <property type="component" value="Chromosome"/>
</dbReference>
<dbReference type="GO" id="GO:0003998">
    <property type="term" value="F:acylphosphatase activity"/>
    <property type="evidence" value="ECO:0007669"/>
    <property type="project" value="UniProtKB-EC"/>
</dbReference>
<dbReference type="Gene3D" id="3.30.70.100">
    <property type="match status" value="1"/>
</dbReference>
<dbReference type="InterPro" id="IPR020456">
    <property type="entry name" value="Acylphosphatase"/>
</dbReference>
<dbReference type="InterPro" id="IPR001792">
    <property type="entry name" value="Acylphosphatase-like_dom"/>
</dbReference>
<dbReference type="InterPro" id="IPR036046">
    <property type="entry name" value="Acylphosphatase-like_dom_sf"/>
</dbReference>
<dbReference type="InterPro" id="IPR017968">
    <property type="entry name" value="Acylphosphatase_CS"/>
</dbReference>
<dbReference type="NCBIfam" id="NF011002">
    <property type="entry name" value="PRK14428.1"/>
    <property type="match status" value="1"/>
</dbReference>
<dbReference type="PANTHER" id="PTHR47268">
    <property type="entry name" value="ACYLPHOSPHATASE"/>
    <property type="match status" value="1"/>
</dbReference>
<dbReference type="PANTHER" id="PTHR47268:SF4">
    <property type="entry name" value="ACYLPHOSPHATASE"/>
    <property type="match status" value="1"/>
</dbReference>
<dbReference type="Pfam" id="PF00708">
    <property type="entry name" value="Acylphosphatase"/>
    <property type="match status" value="1"/>
</dbReference>
<dbReference type="PRINTS" id="PR00112">
    <property type="entry name" value="ACYLPHPHTASE"/>
</dbReference>
<dbReference type="SUPFAM" id="SSF54975">
    <property type="entry name" value="Acylphosphatase/BLUF domain-like"/>
    <property type="match status" value="1"/>
</dbReference>
<dbReference type="PROSITE" id="PS00150">
    <property type="entry name" value="ACYLPHOSPHATASE_1"/>
    <property type="match status" value="1"/>
</dbReference>
<dbReference type="PROSITE" id="PS00151">
    <property type="entry name" value="ACYLPHOSPHATASE_2"/>
    <property type="match status" value="1"/>
</dbReference>
<dbReference type="PROSITE" id="PS51160">
    <property type="entry name" value="ACYLPHOSPHATASE_3"/>
    <property type="match status" value="1"/>
</dbReference>
<protein>
    <recommendedName>
        <fullName>Acylphosphatase</fullName>
        <ecNumber>3.6.1.7</ecNumber>
    </recommendedName>
    <alternativeName>
        <fullName>Acylphosphate phosphohydrolase</fullName>
    </alternativeName>
</protein>
<keyword id="KW-0378">Hydrolase</keyword>
<keyword id="KW-1185">Reference proteome</keyword>
<organism>
    <name type="scientific">Bifidobacterium longum (strain NCC 2705)</name>
    <dbReference type="NCBI Taxonomy" id="206672"/>
    <lineage>
        <taxon>Bacteria</taxon>
        <taxon>Bacillati</taxon>
        <taxon>Actinomycetota</taxon>
        <taxon>Actinomycetes</taxon>
        <taxon>Bifidobacteriales</taxon>
        <taxon>Bifidobacteriaceae</taxon>
        <taxon>Bifidobacterium</taxon>
    </lineage>
</organism>
<comment type="catalytic activity">
    <reaction>
        <text>an acyl phosphate + H2O = a carboxylate + phosphate + H(+)</text>
        <dbReference type="Rhea" id="RHEA:14965"/>
        <dbReference type="ChEBI" id="CHEBI:15377"/>
        <dbReference type="ChEBI" id="CHEBI:15378"/>
        <dbReference type="ChEBI" id="CHEBI:29067"/>
        <dbReference type="ChEBI" id="CHEBI:43474"/>
        <dbReference type="ChEBI" id="CHEBI:59918"/>
        <dbReference type="EC" id="3.6.1.7"/>
    </reaction>
</comment>
<comment type="similarity">
    <text evidence="2">Belongs to the acylphosphatase family.</text>
</comment>
<sequence length="97" mass="10714">MRQSANLVRKHIVVTGLVQGVGFRYFTVTQARRLGVQGWVRNCRDGSVELEAQGSSDAVQALVEQLAIGPRWSEVSHVAVHDMPIIDETARAFGVRQ</sequence>
<proteinExistence type="inferred from homology"/>
<reference key="1">
    <citation type="journal article" date="2002" name="Proc. Natl. Acad. Sci. U.S.A.">
        <title>The genome sequence of Bifidobacterium longum reflects its adaptation to the human gastrointestinal tract.</title>
        <authorList>
            <person name="Schell M.A."/>
            <person name="Karmirantzou M."/>
            <person name="Snel B."/>
            <person name="Vilanova D."/>
            <person name="Berger B."/>
            <person name="Pessi G."/>
            <person name="Zwahlen M.-C."/>
            <person name="Desiere F."/>
            <person name="Bork P."/>
            <person name="Delley M."/>
            <person name="Pridmore R.D."/>
            <person name="Arigoni F."/>
        </authorList>
    </citation>
    <scope>NUCLEOTIDE SEQUENCE [LARGE SCALE GENOMIC DNA]</scope>
    <source>
        <strain>NCC 2705</strain>
    </source>
</reference>
<feature type="chain" id="PRO_0000326659" description="Acylphosphatase">
    <location>
        <begin position="1"/>
        <end position="97"/>
    </location>
</feature>
<feature type="domain" description="Acylphosphatase-like" evidence="1">
    <location>
        <begin position="9"/>
        <end position="97"/>
    </location>
</feature>
<feature type="active site" evidence="1">
    <location>
        <position position="24"/>
    </location>
</feature>
<feature type="active site" evidence="1">
    <location>
        <position position="42"/>
    </location>
</feature>